<accession>Q1MB43</accession>
<name>ACCA_RHIJ3</name>
<protein>
    <recommendedName>
        <fullName evidence="1">Acetyl-coenzyme A carboxylase carboxyl transferase subunit alpha</fullName>
        <shortName evidence="1">ACCase subunit alpha</shortName>
        <shortName evidence="1">Acetyl-CoA carboxylase carboxyltransferase subunit alpha</shortName>
        <ecNumber evidence="1">2.1.3.15</ecNumber>
    </recommendedName>
</protein>
<sequence length="317" mass="34535">MHNYLDFEKPISDLEGKIIELKKLATEDESIDTTDEIGRLEVRVREAIVEIYSKLNPWQKTQVARHPQRPHFVDYAKTLFQEFTPLAGDRKFSEDAAIQAGLARFRGQPVAVIGQEKGNDTKSRLKHNFGSPRPEGYRKAIRILEMADRFGLPVISLVDTAGAYPGVGAEERGQAEAIARSTEMCLGVKVPLVSVVIGEGGSGGAIAIATGNKVYMLEHSIYSVISPEGAASILWRDSTRAREAATNMKITAEDLKSLGVIDGIISEPLGGAHRDPDSVIAATGDVIASALAEMAPRSGEQLRNDRRQKFLAMGRNL</sequence>
<gene>
    <name evidence="1" type="primary">accA</name>
    <name type="ordered locus">RL4355</name>
</gene>
<organism>
    <name type="scientific">Rhizobium johnstonii (strain DSM 114642 / LMG 32736 / 3841)</name>
    <name type="common">Rhizobium leguminosarum bv. viciae</name>
    <dbReference type="NCBI Taxonomy" id="216596"/>
    <lineage>
        <taxon>Bacteria</taxon>
        <taxon>Pseudomonadati</taxon>
        <taxon>Pseudomonadota</taxon>
        <taxon>Alphaproteobacteria</taxon>
        <taxon>Hyphomicrobiales</taxon>
        <taxon>Rhizobiaceae</taxon>
        <taxon>Rhizobium/Agrobacterium group</taxon>
        <taxon>Rhizobium</taxon>
        <taxon>Rhizobium johnstonii</taxon>
    </lineage>
</organism>
<reference key="1">
    <citation type="journal article" date="2006" name="Genome Biol.">
        <title>The genome of Rhizobium leguminosarum has recognizable core and accessory components.</title>
        <authorList>
            <person name="Young J.P.W."/>
            <person name="Crossman L.C."/>
            <person name="Johnston A.W.B."/>
            <person name="Thomson N.R."/>
            <person name="Ghazoui Z.F."/>
            <person name="Hull K.H."/>
            <person name="Wexler M."/>
            <person name="Curson A.R.J."/>
            <person name="Todd J.D."/>
            <person name="Poole P.S."/>
            <person name="Mauchline T.H."/>
            <person name="East A.K."/>
            <person name="Quail M.A."/>
            <person name="Churcher C."/>
            <person name="Arrowsmith C."/>
            <person name="Cherevach I."/>
            <person name="Chillingworth T."/>
            <person name="Clarke K."/>
            <person name="Cronin A."/>
            <person name="Davis P."/>
            <person name="Fraser A."/>
            <person name="Hance Z."/>
            <person name="Hauser H."/>
            <person name="Jagels K."/>
            <person name="Moule S."/>
            <person name="Mungall K."/>
            <person name="Norbertczak H."/>
            <person name="Rabbinowitsch E."/>
            <person name="Sanders M."/>
            <person name="Simmonds M."/>
            <person name="Whitehead S."/>
            <person name="Parkhill J."/>
        </authorList>
    </citation>
    <scope>NUCLEOTIDE SEQUENCE [LARGE SCALE GENOMIC DNA]</scope>
    <source>
        <strain>DSM 114642 / LMG 32736 / 3841</strain>
    </source>
</reference>
<comment type="function">
    <text evidence="1">Component of the acetyl coenzyme A carboxylase (ACC) complex. First, biotin carboxylase catalyzes the carboxylation of biotin on its carrier protein (BCCP) and then the CO(2) group is transferred by the carboxyltransferase to acetyl-CoA to form malonyl-CoA.</text>
</comment>
<comment type="catalytic activity">
    <reaction evidence="1">
        <text>N(6)-carboxybiotinyl-L-lysyl-[protein] + acetyl-CoA = N(6)-biotinyl-L-lysyl-[protein] + malonyl-CoA</text>
        <dbReference type="Rhea" id="RHEA:54728"/>
        <dbReference type="Rhea" id="RHEA-COMP:10505"/>
        <dbReference type="Rhea" id="RHEA-COMP:10506"/>
        <dbReference type="ChEBI" id="CHEBI:57288"/>
        <dbReference type="ChEBI" id="CHEBI:57384"/>
        <dbReference type="ChEBI" id="CHEBI:83144"/>
        <dbReference type="ChEBI" id="CHEBI:83145"/>
        <dbReference type="EC" id="2.1.3.15"/>
    </reaction>
</comment>
<comment type="pathway">
    <text evidence="1">Lipid metabolism; malonyl-CoA biosynthesis; malonyl-CoA from acetyl-CoA: step 1/1.</text>
</comment>
<comment type="subunit">
    <text evidence="1">Acetyl-CoA carboxylase is a heterohexamer composed of biotin carboxyl carrier protein (AccB), biotin carboxylase (AccC) and two subunits each of ACCase subunit alpha (AccA) and ACCase subunit beta (AccD).</text>
</comment>
<comment type="subcellular location">
    <subcellularLocation>
        <location evidence="1">Cytoplasm</location>
    </subcellularLocation>
</comment>
<comment type="similarity">
    <text evidence="1">Belongs to the AccA family.</text>
</comment>
<proteinExistence type="inferred from homology"/>
<dbReference type="EC" id="2.1.3.15" evidence="1"/>
<dbReference type="EMBL" id="AM236080">
    <property type="protein sequence ID" value="CAK09842.1"/>
    <property type="molecule type" value="Genomic_DNA"/>
</dbReference>
<dbReference type="RefSeq" id="WP_011653737.1">
    <property type="nucleotide sequence ID" value="NC_008380.1"/>
</dbReference>
<dbReference type="SMR" id="Q1MB43"/>
<dbReference type="EnsemblBacteria" id="CAK09842">
    <property type="protein sequence ID" value="CAK09842"/>
    <property type="gene ID" value="RL4355"/>
</dbReference>
<dbReference type="KEGG" id="rle:RL4355"/>
<dbReference type="eggNOG" id="COG0825">
    <property type="taxonomic scope" value="Bacteria"/>
</dbReference>
<dbReference type="HOGENOM" id="CLU_015486_0_2_5"/>
<dbReference type="UniPathway" id="UPA00655">
    <property type="reaction ID" value="UER00711"/>
</dbReference>
<dbReference type="Proteomes" id="UP000006575">
    <property type="component" value="Chromosome"/>
</dbReference>
<dbReference type="GO" id="GO:0009317">
    <property type="term" value="C:acetyl-CoA carboxylase complex"/>
    <property type="evidence" value="ECO:0007669"/>
    <property type="project" value="InterPro"/>
</dbReference>
<dbReference type="GO" id="GO:0003989">
    <property type="term" value="F:acetyl-CoA carboxylase activity"/>
    <property type="evidence" value="ECO:0007669"/>
    <property type="project" value="InterPro"/>
</dbReference>
<dbReference type="GO" id="GO:0005524">
    <property type="term" value="F:ATP binding"/>
    <property type="evidence" value="ECO:0007669"/>
    <property type="project" value="UniProtKB-KW"/>
</dbReference>
<dbReference type="GO" id="GO:0016743">
    <property type="term" value="F:carboxyl- or carbamoyltransferase activity"/>
    <property type="evidence" value="ECO:0007669"/>
    <property type="project" value="UniProtKB-UniRule"/>
</dbReference>
<dbReference type="GO" id="GO:0006633">
    <property type="term" value="P:fatty acid biosynthetic process"/>
    <property type="evidence" value="ECO:0007669"/>
    <property type="project" value="UniProtKB-KW"/>
</dbReference>
<dbReference type="GO" id="GO:2001295">
    <property type="term" value="P:malonyl-CoA biosynthetic process"/>
    <property type="evidence" value="ECO:0007669"/>
    <property type="project" value="UniProtKB-UniRule"/>
</dbReference>
<dbReference type="Gene3D" id="3.90.226.10">
    <property type="entry name" value="2-enoyl-CoA Hydratase, Chain A, domain 1"/>
    <property type="match status" value="1"/>
</dbReference>
<dbReference type="HAMAP" id="MF_00823">
    <property type="entry name" value="AcetylCoA_CT_alpha"/>
    <property type="match status" value="1"/>
</dbReference>
<dbReference type="InterPro" id="IPR001095">
    <property type="entry name" value="Acetyl_CoA_COase_a_su"/>
</dbReference>
<dbReference type="InterPro" id="IPR029045">
    <property type="entry name" value="ClpP/crotonase-like_dom_sf"/>
</dbReference>
<dbReference type="InterPro" id="IPR011763">
    <property type="entry name" value="COA_CT_C"/>
</dbReference>
<dbReference type="NCBIfam" id="TIGR00513">
    <property type="entry name" value="accA"/>
    <property type="match status" value="1"/>
</dbReference>
<dbReference type="NCBIfam" id="NF041504">
    <property type="entry name" value="AccA_sub"/>
    <property type="match status" value="1"/>
</dbReference>
<dbReference type="NCBIfam" id="NF004344">
    <property type="entry name" value="PRK05724.1"/>
    <property type="match status" value="1"/>
</dbReference>
<dbReference type="PANTHER" id="PTHR42853">
    <property type="entry name" value="ACETYL-COENZYME A CARBOXYLASE CARBOXYL TRANSFERASE SUBUNIT ALPHA"/>
    <property type="match status" value="1"/>
</dbReference>
<dbReference type="PANTHER" id="PTHR42853:SF3">
    <property type="entry name" value="ACETYL-COENZYME A CARBOXYLASE CARBOXYL TRANSFERASE SUBUNIT ALPHA, CHLOROPLASTIC"/>
    <property type="match status" value="1"/>
</dbReference>
<dbReference type="Pfam" id="PF03255">
    <property type="entry name" value="ACCA"/>
    <property type="match status" value="1"/>
</dbReference>
<dbReference type="PRINTS" id="PR01069">
    <property type="entry name" value="ACCCTRFRASEA"/>
</dbReference>
<dbReference type="SUPFAM" id="SSF52096">
    <property type="entry name" value="ClpP/crotonase"/>
    <property type="match status" value="1"/>
</dbReference>
<dbReference type="PROSITE" id="PS50989">
    <property type="entry name" value="COA_CT_CTER"/>
    <property type="match status" value="1"/>
</dbReference>
<keyword id="KW-0067">ATP-binding</keyword>
<keyword id="KW-0963">Cytoplasm</keyword>
<keyword id="KW-0275">Fatty acid biosynthesis</keyword>
<keyword id="KW-0276">Fatty acid metabolism</keyword>
<keyword id="KW-0444">Lipid biosynthesis</keyword>
<keyword id="KW-0443">Lipid metabolism</keyword>
<keyword id="KW-0547">Nucleotide-binding</keyword>
<keyword id="KW-0808">Transferase</keyword>
<feature type="chain" id="PRO_1000062663" description="Acetyl-coenzyme A carboxylase carboxyl transferase subunit alpha">
    <location>
        <begin position="1"/>
        <end position="317"/>
    </location>
</feature>
<feature type="domain" description="CoA carboxyltransferase C-terminal" evidence="2">
    <location>
        <begin position="40"/>
        <end position="293"/>
    </location>
</feature>
<evidence type="ECO:0000255" key="1">
    <source>
        <dbReference type="HAMAP-Rule" id="MF_00823"/>
    </source>
</evidence>
<evidence type="ECO:0000255" key="2">
    <source>
        <dbReference type="PROSITE-ProRule" id="PRU01137"/>
    </source>
</evidence>